<organism>
    <name type="scientific">Aster yellows witches'-broom phytoplasma (strain AYWB)</name>
    <dbReference type="NCBI Taxonomy" id="322098"/>
    <lineage>
        <taxon>Bacteria</taxon>
        <taxon>Bacillati</taxon>
        <taxon>Mycoplasmatota</taxon>
        <taxon>Mollicutes</taxon>
        <taxon>Acholeplasmatales</taxon>
        <taxon>Acholeplasmataceae</taxon>
        <taxon>Candidatus Phytoplasma</taxon>
        <taxon>16SrI (Aster yellows group)</taxon>
    </lineage>
</organism>
<dbReference type="EMBL" id="CP000061">
    <property type="protein sequence ID" value="ABC65634.1"/>
    <property type="molecule type" value="Genomic_DNA"/>
</dbReference>
<dbReference type="RefSeq" id="WP_011412796.1">
    <property type="nucleotide sequence ID" value="NC_007716.1"/>
</dbReference>
<dbReference type="SMR" id="Q2NIV9"/>
<dbReference type="STRING" id="322098.AYWB_517"/>
<dbReference type="KEGG" id="ayw:AYWB_517"/>
<dbReference type="eggNOG" id="COG0091">
    <property type="taxonomic scope" value="Bacteria"/>
</dbReference>
<dbReference type="HOGENOM" id="CLU_083987_3_3_14"/>
<dbReference type="OrthoDB" id="9805969at2"/>
<dbReference type="PhylomeDB" id="Q2NIV9"/>
<dbReference type="Proteomes" id="UP000001934">
    <property type="component" value="Chromosome"/>
</dbReference>
<dbReference type="GO" id="GO:0022625">
    <property type="term" value="C:cytosolic large ribosomal subunit"/>
    <property type="evidence" value="ECO:0007669"/>
    <property type="project" value="TreeGrafter"/>
</dbReference>
<dbReference type="GO" id="GO:0019843">
    <property type="term" value="F:rRNA binding"/>
    <property type="evidence" value="ECO:0007669"/>
    <property type="project" value="UniProtKB-UniRule"/>
</dbReference>
<dbReference type="GO" id="GO:0003735">
    <property type="term" value="F:structural constituent of ribosome"/>
    <property type="evidence" value="ECO:0007669"/>
    <property type="project" value="InterPro"/>
</dbReference>
<dbReference type="GO" id="GO:0006412">
    <property type="term" value="P:translation"/>
    <property type="evidence" value="ECO:0007669"/>
    <property type="project" value="UniProtKB-UniRule"/>
</dbReference>
<dbReference type="CDD" id="cd00336">
    <property type="entry name" value="Ribosomal_L22"/>
    <property type="match status" value="1"/>
</dbReference>
<dbReference type="Gene3D" id="3.90.470.10">
    <property type="entry name" value="Ribosomal protein L22/L17"/>
    <property type="match status" value="1"/>
</dbReference>
<dbReference type="HAMAP" id="MF_01331_B">
    <property type="entry name" value="Ribosomal_uL22_B"/>
    <property type="match status" value="1"/>
</dbReference>
<dbReference type="InterPro" id="IPR001063">
    <property type="entry name" value="Ribosomal_uL22"/>
</dbReference>
<dbReference type="InterPro" id="IPR005727">
    <property type="entry name" value="Ribosomal_uL22_bac/chlpt-type"/>
</dbReference>
<dbReference type="InterPro" id="IPR047867">
    <property type="entry name" value="Ribosomal_uL22_bac/org-type"/>
</dbReference>
<dbReference type="InterPro" id="IPR018260">
    <property type="entry name" value="Ribosomal_uL22_CS"/>
</dbReference>
<dbReference type="InterPro" id="IPR036394">
    <property type="entry name" value="Ribosomal_uL22_sf"/>
</dbReference>
<dbReference type="NCBIfam" id="TIGR01044">
    <property type="entry name" value="rplV_bact"/>
    <property type="match status" value="1"/>
</dbReference>
<dbReference type="PANTHER" id="PTHR13501">
    <property type="entry name" value="CHLOROPLAST 50S RIBOSOMAL PROTEIN L22-RELATED"/>
    <property type="match status" value="1"/>
</dbReference>
<dbReference type="PANTHER" id="PTHR13501:SF8">
    <property type="entry name" value="LARGE RIBOSOMAL SUBUNIT PROTEIN UL22M"/>
    <property type="match status" value="1"/>
</dbReference>
<dbReference type="Pfam" id="PF00237">
    <property type="entry name" value="Ribosomal_L22"/>
    <property type="match status" value="1"/>
</dbReference>
<dbReference type="SUPFAM" id="SSF54843">
    <property type="entry name" value="Ribosomal protein L22"/>
    <property type="match status" value="1"/>
</dbReference>
<dbReference type="PROSITE" id="PS00464">
    <property type="entry name" value="RIBOSOMAL_L22"/>
    <property type="match status" value="1"/>
</dbReference>
<sequence length="129" mass="14289">METKNAKAIARKVSIAPRKARLVVDLIRGKNIAQAQAILTFTPKVAAPVILKLLNSAVSNAVNNLKLNREQLYVKEVFVNEGFRLKRMFPRAKGSGDMIKKRTSHITLVITSSTNLQTSKEEEQSGSKN</sequence>
<proteinExistence type="inferred from homology"/>
<gene>
    <name evidence="1" type="primary">rplV</name>
    <name type="ordered locus">AYWB_517</name>
</gene>
<keyword id="KW-0687">Ribonucleoprotein</keyword>
<keyword id="KW-0689">Ribosomal protein</keyword>
<keyword id="KW-0694">RNA-binding</keyword>
<keyword id="KW-0699">rRNA-binding</keyword>
<comment type="function">
    <text evidence="1">This protein binds specifically to 23S rRNA; its binding is stimulated by other ribosomal proteins, e.g. L4, L17, and L20. It is important during the early stages of 50S assembly. It makes multiple contacts with different domains of the 23S rRNA in the assembled 50S subunit and ribosome (By similarity).</text>
</comment>
<comment type="function">
    <text evidence="1">The globular domain of the protein is located near the polypeptide exit tunnel on the outside of the subunit, while an extended beta-hairpin is found that lines the wall of the exit tunnel in the center of the 70S ribosome.</text>
</comment>
<comment type="subunit">
    <text evidence="1">Part of the 50S ribosomal subunit.</text>
</comment>
<comment type="similarity">
    <text evidence="1">Belongs to the universal ribosomal protein uL22 family.</text>
</comment>
<accession>Q2NIV9</accession>
<reference key="1">
    <citation type="journal article" date="2006" name="J. Bacteriol.">
        <title>Living with genome instability: the adaptation of phytoplasmas to diverse environments of their insect and plant hosts.</title>
        <authorList>
            <person name="Bai X."/>
            <person name="Zhang J."/>
            <person name="Ewing A."/>
            <person name="Miller S.A."/>
            <person name="Jancso Radek A."/>
            <person name="Shevchenko D.V."/>
            <person name="Tsukerman K."/>
            <person name="Walunas T."/>
            <person name="Lapidus A."/>
            <person name="Campbell J.W."/>
            <person name="Hogenhout S.A."/>
        </authorList>
    </citation>
    <scope>NUCLEOTIDE SEQUENCE [LARGE SCALE GENOMIC DNA]</scope>
    <source>
        <strain>AYWB</strain>
    </source>
</reference>
<name>RL22_AYWBP</name>
<feature type="chain" id="PRO_0000243115" description="Large ribosomal subunit protein uL22">
    <location>
        <begin position="1"/>
        <end position="129"/>
    </location>
</feature>
<protein>
    <recommendedName>
        <fullName evidence="1">Large ribosomal subunit protein uL22</fullName>
    </recommendedName>
    <alternativeName>
        <fullName evidence="2">50S ribosomal protein L22</fullName>
    </alternativeName>
</protein>
<evidence type="ECO:0000255" key="1">
    <source>
        <dbReference type="HAMAP-Rule" id="MF_01331"/>
    </source>
</evidence>
<evidence type="ECO:0000305" key="2"/>